<gene>
    <name evidence="1" type="primary">rpsS</name>
    <name type="ordered locus">Sfum_1559</name>
</gene>
<accession>A0LIJ4</accession>
<feature type="chain" id="PRO_1000051136" description="Small ribosomal subunit protein uS19">
    <location>
        <begin position="1"/>
        <end position="95"/>
    </location>
</feature>
<protein>
    <recommendedName>
        <fullName evidence="1">Small ribosomal subunit protein uS19</fullName>
    </recommendedName>
    <alternativeName>
        <fullName evidence="2">30S ribosomal protein S19</fullName>
    </alternativeName>
</protein>
<dbReference type="EMBL" id="CP000478">
    <property type="protein sequence ID" value="ABK17246.1"/>
    <property type="molecule type" value="Genomic_DNA"/>
</dbReference>
<dbReference type="RefSeq" id="WP_011698416.1">
    <property type="nucleotide sequence ID" value="NC_008554.1"/>
</dbReference>
<dbReference type="SMR" id="A0LIJ4"/>
<dbReference type="FunCoup" id="A0LIJ4">
    <property type="interactions" value="537"/>
</dbReference>
<dbReference type="STRING" id="335543.Sfum_1559"/>
<dbReference type="KEGG" id="sfu:Sfum_1559"/>
<dbReference type="eggNOG" id="COG0185">
    <property type="taxonomic scope" value="Bacteria"/>
</dbReference>
<dbReference type="HOGENOM" id="CLU_144911_0_1_7"/>
<dbReference type="InParanoid" id="A0LIJ4"/>
<dbReference type="OrthoDB" id="9797833at2"/>
<dbReference type="Proteomes" id="UP000001784">
    <property type="component" value="Chromosome"/>
</dbReference>
<dbReference type="GO" id="GO:0005737">
    <property type="term" value="C:cytoplasm"/>
    <property type="evidence" value="ECO:0007669"/>
    <property type="project" value="UniProtKB-ARBA"/>
</dbReference>
<dbReference type="GO" id="GO:0015935">
    <property type="term" value="C:small ribosomal subunit"/>
    <property type="evidence" value="ECO:0007669"/>
    <property type="project" value="InterPro"/>
</dbReference>
<dbReference type="GO" id="GO:0019843">
    <property type="term" value="F:rRNA binding"/>
    <property type="evidence" value="ECO:0007669"/>
    <property type="project" value="UniProtKB-UniRule"/>
</dbReference>
<dbReference type="GO" id="GO:0003735">
    <property type="term" value="F:structural constituent of ribosome"/>
    <property type="evidence" value="ECO:0007669"/>
    <property type="project" value="InterPro"/>
</dbReference>
<dbReference type="GO" id="GO:0000028">
    <property type="term" value="P:ribosomal small subunit assembly"/>
    <property type="evidence" value="ECO:0007669"/>
    <property type="project" value="TreeGrafter"/>
</dbReference>
<dbReference type="GO" id="GO:0006412">
    <property type="term" value="P:translation"/>
    <property type="evidence" value="ECO:0007669"/>
    <property type="project" value="UniProtKB-UniRule"/>
</dbReference>
<dbReference type="FunFam" id="3.30.860.10:FF:000001">
    <property type="entry name" value="30S ribosomal protein S19"/>
    <property type="match status" value="1"/>
</dbReference>
<dbReference type="Gene3D" id="3.30.860.10">
    <property type="entry name" value="30s Ribosomal Protein S19, Chain A"/>
    <property type="match status" value="1"/>
</dbReference>
<dbReference type="HAMAP" id="MF_00531">
    <property type="entry name" value="Ribosomal_uS19"/>
    <property type="match status" value="1"/>
</dbReference>
<dbReference type="InterPro" id="IPR002222">
    <property type="entry name" value="Ribosomal_uS19"/>
</dbReference>
<dbReference type="InterPro" id="IPR005732">
    <property type="entry name" value="Ribosomal_uS19_bac-type"/>
</dbReference>
<dbReference type="InterPro" id="IPR020934">
    <property type="entry name" value="Ribosomal_uS19_CS"/>
</dbReference>
<dbReference type="InterPro" id="IPR023575">
    <property type="entry name" value="Ribosomal_uS19_SF"/>
</dbReference>
<dbReference type="NCBIfam" id="TIGR01050">
    <property type="entry name" value="rpsS_bact"/>
    <property type="match status" value="1"/>
</dbReference>
<dbReference type="PANTHER" id="PTHR11880">
    <property type="entry name" value="RIBOSOMAL PROTEIN S19P FAMILY MEMBER"/>
    <property type="match status" value="1"/>
</dbReference>
<dbReference type="PANTHER" id="PTHR11880:SF8">
    <property type="entry name" value="SMALL RIBOSOMAL SUBUNIT PROTEIN US19M"/>
    <property type="match status" value="1"/>
</dbReference>
<dbReference type="Pfam" id="PF00203">
    <property type="entry name" value="Ribosomal_S19"/>
    <property type="match status" value="1"/>
</dbReference>
<dbReference type="PIRSF" id="PIRSF002144">
    <property type="entry name" value="Ribosomal_S19"/>
    <property type="match status" value="1"/>
</dbReference>
<dbReference type="PRINTS" id="PR00975">
    <property type="entry name" value="RIBOSOMALS19"/>
</dbReference>
<dbReference type="SUPFAM" id="SSF54570">
    <property type="entry name" value="Ribosomal protein S19"/>
    <property type="match status" value="1"/>
</dbReference>
<dbReference type="PROSITE" id="PS00323">
    <property type="entry name" value="RIBOSOMAL_S19"/>
    <property type="match status" value="1"/>
</dbReference>
<proteinExistence type="inferred from homology"/>
<reference key="1">
    <citation type="submission" date="2006-10" db="EMBL/GenBank/DDBJ databases">
        <title>Complete sequence of Syntrophobacter fumaroxidans MPOB.</title>
        <authorList>
            <consortium name="US DOE Joint Genome Institute"/>
            <person name="Copeland A."/>
            <person name="Lucas S."/>
            <person name="Lapidus A."/>
            <person name="Barry K."/>
            <person name="Detter J.C."/>
            <person name="Glavina del Rio T."/>
            <person name="Hammon N."/>
            <person name="Israni S."/>
            <person name="Pitluck S."/>
            <person name="Goltsman E.G."/>
            <person name="Martinez M."/>
            <person name="Schmutz J."/>
            <person name="Larimer F."/>
            <person name="Land M."/>
            <person name="Hauser L."/>
            <person name="Kyrpides N."/>
            <person name="Kim E."/>
            <person name="Boone D.R."/>
            <person name="Brockman F."/>
            <person name="Culley D."/>
            <person name="Ferry J."/>
            <person name="Gunsalus R."/>
            <person name="McInerney M.J."/>
            <person name="Morrison M."/>
            <person name="Plugge C."/>
            <person name="Rohlin L."/>
            <person name="Scholten J."/>
            <person name="Sieber J."/>
            <person name="Stams A.J.M."/>
            <person name="Worm P."/>
            <person name="Henstra A.M."/>
            <person name="Richardson P."/>
        </authorList>
    </citation>
    <scope>NUCLEOTIDE SEQUENCE [LARGE SCALE GENOMIC DNA]</scope>
    <source>
        <strain>DSM 10017 / MPOB</strain>
    </source>
</reference>
<organism>
    <name type="scientific">Syntrophobacter fumaroxidans (strain DSM 10017 / MPOB)</name>
    <dbReference type="NCBI Taxonomy" id="335543"/>
    <lineage>
        <taxon>Bacteria</taxon>
        <taxon>Pseudomonadati</taxon>
        <taxon>Thermodesulfobacteriota</taxon>
        <taxon>Syntrophobacteria</taxon>
        <taxon>Syntrophobacterales</taxon>
        <taxon>Syntrophobacteraceae</taxon>
        <taxon>Syntrophobacter</taxon>
    </lineage>
</organism>
<comment type="function">
    <text evidence="1">Protein S19 forms a complex with S13 that binds strongly to the 16S ribosomal RNA.</text>
</comment>
<comment type="similarity">
    <text evidence="1">Belongs to the universal ribosomal protein uS19 family.</text>
</comment>
<sequence length="95" mass="10730">MPRSLKKGPFVDGHLFEKIYKAKETGDRKVIKTWSRRSTIVPEFVGITVAVHNGKKFIPVFITENMVGHKLGEFAPTRTFYGHAGDKKSKVKGKK</sequence>
<keyword id="KW-1185">Reference proteome</keyword>
<keyword id="KW-0687">Ribonucleoprotein</keyword>
<keyword id="KW-0689">Ribosomal protein</keyword>
<keyword id="KW-0694">RNA-binding</keyword>
<keyword id="KW-0699">rRNA-binding</keyword>
<name>RS19_SYNFM</name>
<evidence type="ECO:0000255" key="1">
    <source>
        <dbReference type="HAMAP-Rule" id="MF_00531"/>
    </source>
</evidence>
<evidence type="ECO:0000305" key="2"/>